<protein>
    <recommendedName>
        <fullName>Cyclin-dependent kinase inhibitor 1</fullName>
    </recommendedName>
    <alternativeName>
        <fullName>Inhibitor/interactor of CDK protein 1</fullName>
    </alternativeName>
    <alternativeName>
        <fullName>KIP-related protein 1</fullName>
    </alternativeName>
</protein>
<sequence>MVRKYRKAKGIVEAGVSSTYMQLRSRRIVYVRSEKSSSVSVVGDNGVSSSCSGSNEYKKKELIHLEEEDKDGDTETSTYRRGTKRKLFENLREEEKEELSKSMENYSSEFESAVKESLDCCCSGRKTMEETVTAEEEEKAKLMTEMPTESEIEDFFVEAEKQLKEKFKKKYNFDFEKEKPLEGRYEWVKLE</sequence>
<gene>
    <name type="primary">KRP1</name>
    <name type="synonym">ICK1</name>
    <name type="ordered locus">At2g23430</name>
    <name type="ORF">F26B6.8</name>
</gene>
<accession>Q67Y93</accession>
<accession>O04154</accession>
<accession>O82809</accession>
<accession>Q8LDX1</accession>
<feature type="chain" id="PRO_0000294087" description="Cyclin-dependent kinase inhibitor 1">
    <location>
        <begin position="1"/>
        <end position="191"/>
    </location>
</feature>
<feature type="region of interest" description="Disordered" evidence="1">
    <location>
        <begin position="62"/>
        <end position="81"/>
    </location>
</feature>
<feature type="region of interest" description="Required for inhibitory function and interaction with CDK kinase complexes">
    <location>
        <begin position="162"/>
        <end position="191"/>
    </location>
</feature>
<feature type="mutagenesis site" description="Slightly affects transport to nucleus; when associated with A-81." evidence="12">
    <original>R</original>
    <variation>A</variation>
    <location>
        <position position="80"/>
    </location>
</feature>
<feature type="mutagenesis site" description="Slightly affects transport to nucleus; when associated with A-80." evidence="12">
    <original>R</original>
    <variation>A</variation>
    <location>
        <position position="81"/>
    </location>
</feature>
<feature type="mutagenesis site" description="Affects transport to nucleus, but does not abolish it; when associated with A-86." evidence="12 13">
    <original>K</original>
    <variation>A</variation>
    <location>
        <position position="84"/>
    </location>
</feature>
<feature type="mutagenesis site" description="Affects transport to nucleus, but does not abolish it; when associated with A-84." evidence="12 13">
    <original>K</original>
    <variation>A</variation>
    <location>
        <position position="86"/>
    </location>
</feature>
<feature type="sequence conflict" description="In Ref. 1; AAC49698." evidence="18" ref="1">
    <original>F</original>
    <variation>C</variation>
    <location>
        <position position="88"/>
    </location>
</feature>
<feature type="sequence conflict" description="In Ref. 7; AAM62967." evidence="18" ref="7">
    <original>E</original>
    <variation>Q</variation>
    <location>
        <position position="191"/>
    </location>
</feature>
<proteinExistence type="evidence at protein level"/>
<name>KRP1_ARATH</name>
<keyword id="KW-0131">Cell cycle</keyword>
<keyword id="KW-0539">Nucleus</keyword>
<keyword id="KW-0649">Protein kinase inhibitor</keyword>
<keyword id="KW-1185">Reference proteome</keyword>
<keyword id="KW-0832">Ubl conjugation</keyword>
<dbReference type="EMBL" id="U94772">
    <property type="protein sequence ID" value="AAC49698.1"/>
    <property type="molecule type" value="mRNA"/>
</dbReference>
<dbReference type="EMBL" id="AF079587">
    <property type="protein sequence ID" value="AAC34660.1"/>
    <property type="molecule type" value="Genomic_DNA"/>
</dbReference>
<dbReference type="EMBL" id="AC003040">
    <property type="protein sequence ID" value="AAC23758.1"/>
    <property type="molecule type" value="Genomic_DNA"/>
</dbReference>
<dbReference type="EMBL" id="CP002685">
    <property type="protein sequence ID" value="AEC07454.1"/>
    <property type="molecule type" value="Genomic_DNA"/>
</dbReference>
<dbReference type="EMBL" id="AK175492">
    <property type="protein sequence ID" value="BAD43255.1"/>
    <property type="status" value="ALT_FRAME"/>
    <property type="molecule type" value="mRNA"/>
</dbReference>
<dbReference type="EMBL" id="AK176575">
    <property type="protein sequence ID" value="BAD44338.1"/>
    <property type="status" value="ALT_FRAME"/>
    <property type="molecule type" value="mRNA"/>
</dbReference>
<dbReference type="EMBL" id="BT028986">
    <property type="protein sequence ID" value="ABI93895.1"/>
    <property type="molecule type" value="mRNA"/>
</dbReference>
<dbReference type="EMBL" id="AY085749">
    <property type="protein sequence ID" value="AAM62967.1"/>
    <property type="molecule type" value="mRNA"/>
</dbReference>
<dbReference type="PIR" id="T01132">
    <property type="entry name" value="T01132"/>
</dbReference>
<dbReference type="RefSeq" id="NP_179924.1">
    <property type="nucleotide sequence ID" value="NM_127907.4"/>
</dbReference>
<dbReference type="SMR" id="Q67Y93"/>
<dbReference type="BioGRID" id="2227">
    <property type="interactions" value="27"/>
</dbReference>
<dbReference type="FunCoup" id="Q67Y93">
    <property type="interactions" value="14"/>
</dbReference>
<dbReference type="IntAct" id="Q67Y93">
    <property type="interactions" value="6"/>
</dbReference>
<dbReference type="STRING" id="3702.Q67Y93"/>
<dbReference type="PaxDb" id="3702-AT2G23430.1"/>
<dbReference type="ProteomicsDB" id="237100"/>
<dbReference type="EnsemblPlants" id="AT2G23430.1">
    <property type="protein sequence ID" value="AT2G23430.1"/>
    <property type="gene ID" value="AT2G23430"/>
</dbReference>
<dbReference type="GeneID" id="816875"/>
<dbReference type="Gramene" id="AT2G23430.1">
    <property type="protein sequence ID" value="AT2G23430.1"/>
    <property type="gene ID" value="AT2G23430"/>
</dbReference>
<dbReference type="KEGG" id="ath:AT2G23430"/>
<dbReference type="Araport" id="AT2G23430"/>
<dbReference type="TAIR" id="AT2G23430">
    <property type="gene designation" value="ICK1"/>
</dbReference>
<dbReference type="HOGENOM" id="CLU_083146_1_0_1"/>
<dbReference type="InParanoid" id="Q67Y93"/>
<dbReference type="OMA" id="VSSTYMQ"/>
<dbReference type="PRO" id="PR:Q67Y93"/>
<dbReference type="Proteomes" id="UP000006548">
    <property type="component" value="Chromosome 2"/>
</dbReference>
<dbReference type="ExpressionAtlas" id="Q67Y93">
    <property type="expression patterns" value="baseline and differential"/>
</dbReference>
<dbReference type="GO" id="GO:0005654">
    <property type="term" value="C:nucleoplasm"/>
    <property type="evidence" value="ECO:0007669"/>
    <property type="project" value="UniProtKB-SubCell"/>
</dbReference>
<dbReference type="GO" id="GO:0005634">
    <property type="term" value="C:nucleus"/>
    <property type="evidence" value="ECO:0000314"/>
    <property type="project" value="TAIR"/>
</dbReference>
<dbReference type="GO" id="GO:0004861">
    <property type="term" value="F:cyclin-dependent protein serine/threonine kinase inhibitor activity"/>
    <property type="evidence" value="ECO:0000314"/>
    <property type="project" value="TAIR"/>
</dbReference>
<dbReference type="GO" id="GO:0048527">
    <property type="term" value="P:lateral root development"/>
    <property type="evidence" value="ECO:0000315"/>
    <property type="project" value="TAIR"/>
</dbReference>
<dbReference type="GO" id="GO:0010311">
    <property type="term" value="P:lateral root formation"/>
    <property type="evidence" value="ECO:0000315"/>
    <property type="project" value="TAIR"/>
</dbReference>
<dbReference type="GO" id="GO:0048366">
    <property type="term" value="P:leaf development"/>
    <property type="evidence" value="ECO:0000315"/>
    <property type="project" value="TAIR"/>
</dbReference>
<dbReference type="GO" id="GO:0045736">
    <property type="term" value="P:negative regulation of cyclin-dependent protein serine/threonine kinase activity"/>
    <property type="evidence" value="ECO:0000314"/>
    <property type="project" value="TAIR"/>
</dbReference>
<dbReference type="GO" id="GO:0045740">
    <property type="term" value="P:positive regulation of DNA replication"/>
    <property type="evidence" value="ECO:0000315"/>
    <property type="project" value="TAIR"/>
</dbReference>
<dbReference type="GO" id="GO:0009737">
    <property type="term" value="P:response to abscisic acid"/>
    <property type="evidence" value="ECO:0000270"/>
    <property type="project" value="TAIR"/>
</dbReference>
<dbReference type="GO" id="GO:0048367">
    <property type="term" value="P:shoot system development"/>
    <property type="evidence" value="ECO:0000315"/>
    <property type="project" value="TAIR"/>
</dbReference>
<dbReference type="Gene3D" id="4.10.365.10">
    <property type="entry name" value="p27"/>
    <property type="match status" value="1"/>
</dbReference>
<dbReference type="InterPro" id="IPR003175">
    <property type="entry name" value="CDI_dom"/>
</dbReference>
<dbReference type="InterPro" id="IPR044898">
    <property type="entry name" value="CDI_dom_sf"/>
</dbReference>
<dbReference type="InterPro" id="IPR044275">
    <property type="entry name" value="KRP"/>
</dbReference>
<dbReference type="PANTHER" id="PTHR46776">
    <property type="entry name" value="CYCLIN-DEPENDENT KINASE INHIBITOR 4-RELATED"/>
    <property type="match status" value="1"/>
</dbReference>
<dbReference type="Pfam" id="PF02234">
    <property type="entry name" value="CDI"/>
    <property type="match status" value="1"/>
</dbReference>
<dbReference type="PIRSF" id="PIRSF017811">
    <property type="entry name" value="CDK_inhib_pln"/>
    <property type="match status" value="1"/>
</dbReference>
<reference key="1">
    <citation type="journal article" date="1997" name="Nature">
        <title>A plant cyclin-dependent kinase inhibitor gene.</title>
        <authorList>
            <person name="Wang H."/>
            <person name="Fowke L.C."/>
            <person name="Crosby W.L."/>
        </authorList>
    </citation>
    <scope>NUCLEOTIDE SEQUENCE [MRNA]</scope>
    <scope>FUNCTION</scope>
    <scope>INTERACTION WITH CDKA-1</scope>
    <source>
        <strain>cv. Columbia</strain>
    </source>
</reference>
<reference key="2">
    <citation type="journal article" date="1998" name="Plant J.">
        <title>ICK1, a cyclin-dependent protein kinase inhibitor from Arabidopsis thaliana interacts with both Cdc2a and CycD3, and its expression is induced by abscisic acid.</title>
        <authorList>
            <person name="Wang H."/>
            <person name="Qi Q."/>
            <person name="Schorr P."/>
            <person name="Cutler A.J."/>
            <person name="Crosby W.L."/>
            <person name="Fowke L.C."/>
        </authorList>
    </citation>
    <scope>NUCLEOTIDE SEQUENCE [GENOMIC DNA]</scope>
    <scope>FUNCTION</scope>
    <scope>TISSUE SPECIFICITY</scope>
    <scope>INDUCTION</scope>
    <scope>INTERACTION WITH CDKA-1 AND CYCD3-1</scope>
    <source>
        <strain>cv. Columbia</strain>
    </source>
</reference>
<reference key="3">
    <citation type="journal article" date="1999" name="Nature">
        <title>Sequence and analysis of chromosome 2 of the plant Arabidopsis thaliana.</title>
        <authorList>
            <person name="Lin X."/>
            <person name="Kaul S."/>
            <person name="Rounsley S.D."/>
            <person name="Shea T.P."/>
            <person name="Benito M.-I."/>
            <person name="Town C.D."/>
            <person name="Fujii C.Y."/>
            <person name="Mason T.M."/>
            <person name="Bowman C.L."/>
            <person name="Barnstead M.E."/>
            <person name="Feldblyum T.V."/>
            <person name="Buell C.R."/>
            <person name="Ketchum K.A."/>
            <person name="Lee J.J."/>
            <person name="Ronning C.M."/>
            <person name="Koo H.L."/>
            <person name="Moffat K.S."/>
            <person name="Cronin L.A."/>
            <person name="Shen M."/>
            <person name="Pai G."/>
            <person name="Van Aken S."/>
            <person name="Umayam L."/>
            <person name="Tallon L.J."/>
            <person name="Gill J.E."/>
            <person name="Adams M.D."/>
            <person name="Carrera A.J."/>
            <person name="Creasy T.H."/>
            <person name="Goodman H.M."/>
            <person name="Somerville C.R."/>
            <person name="Copenhaver G.P."/>
            <person name="Preuss D."/>
            <person name="Nierman W.C."/>
            <person name="White O."/>
            <person name="Eisen J.A."/>
            <person name="Salzberg S.L."/>
            <person name="Fraser C.M."/>
            <person name="Venter J.C."/>
        </authorList>
    </citation>
    <scope>NUCLEOTIDE SEQUENCE [LARGE SCALE GENOMIC DNA]</scope>
    <source>
        <strain>cv. Columbia</strain>
    </source>
</reference>
<reference key="4">
    <citation type="journal article" date="2017" name="Plant J.">
        <title>Araport11: a complete reannotation of the Arabidopsis thaliana reference genome.</title>
        <authorList>
            <person name="Cheng C.Y."/>
            <person name="Krishnakumar V."/>
            <person name="Chan A.P."/>
            <person name="Thibaud-Nissen F."/>
            <person name="Schobel S."/>
            <person name="Town C.D."/>
        </authorList>
    </citation>
    <scope>GENOME REANNOTATION</scope>
    <source>
        <strain>cv. Columbia</strain>
    </source>
</reference>
<reference key="5">
    <citation type="submission" date="2004-09" db="EMBL/GenBank/DDBJ databases">
        <title>Large-scale analysis of RIKEN Arabidopsis full-length (RAFL) cDNAs.</title>
        <authorList>
            <person name="Totoki Y."/>
            <person name="Seki M."/>
            <person name="Ishida J."/>
            <person name="Nakajima M."/>
            <person name="Enju A."/>
            <person name="Kamiya A."/>
            <person name="Narusaka M."/>
            <person name="Shin-i T."/>
            <person name="Nakagawa M."/>
            <person name="Sakamoto N."/>
            <person name="Oishi K."/>
            <person name="Kohara Y."/>
            <person name="Kobayashi M."/>
            <person name="Toyoda A."/>
            <person name="Sakaki Y."/>
            <person name="Sakurai T."/>
            <person name="Iida K."/>
            <person name="Akiyama K."/>
            <person name="Satou M."/>
            <person name="Toyoda T."/>
            <person name="Konagaya A."/>
            <person name="Carninci P."/>
            <person name="Kawai J."/>
            <person name="Hayashizaki Y."/>
            <person name="Shinozaki K."/>
        </authorList>
    </citation>
    <scope>NUCLEOTIDE SEQUENCE [LARGE SCALE MRNA]</scope>
    <source>
        <strain>cv. Columbia</strain>
    </source>
</reference>
<reference key="6">
    <citation type="submission" date="2006-09" db="EMBL/GenBank/DDBJ databases">
        <title>Arabidopsis ORF clones.</title>
        <authorList>
            <person name="Bautista V.R."/>
            <person name="Kim C.J."/>
            <person name="Chen H."/>
            <person name="Quinitio C."/>
            <person name="Ecker J.R."/>
        </authorList>
    </citation>
    <scope>NUCLEOTIDE SEQUENCE [LARGE SCALE MRNA]</scope>
    <source>
        <strain>cv. Columbia</strain>
    </source>
</reference>
<reference key="7">
    <citation type="submission" date="2002-03" db="EMBL/GenBank/DDBJ databases">
        <title>Full-length cDNA from Arabidopsis thaliana.</title>
        <authorList>
            <person name="Brover V.V."/>
            <person name="Troukhan M.E."/>
            <person name="Alexandrov N.A."/>
            <person name="Lu Y.-P."/>
            <person name="Flavell R.B."/>
            <person name="Feldmann K.A."/>
        </authorList>
    </citation>
    <scope>NUCLEOTIDE SEQUENCE [LARGE SCALE MRNA]</scope>
</reference>
<reference key="8">
    <citation type="journal article" date="2000" name="Plant J.">
        <title>Expression of the plant cyclin-dependent kinase inhibitor ICK1 affects cell division, plant growth and morphology.</title>
        <authorList>
            <person name="Wang H."/>
            <person name="Zhou Y."/>
            <person name="Gilmer S."/>
            <person name="Whitwill S."/>
            <person name="Fowke L.C."/>
        </authorList>
    </citation>
    <scope>FUNCTION</scope>
</reference>
<reference key="9">
    <citation type="journal article" date="2001" name="Plant Cell">
        <title>Functional analysis of cyclin-dependent kinase inhibitors of Arabidopsis.</title>
        <authorList>
            <person name="de Veylder L."/>
            <person name="Beeckman T."/>
            <person name="Beemster G.T.S."/>
            <person name="Krols L."/>
            <person name="Terras F."/>
            <person name="Landrieu I."/>
            <person name="van der Schueren E."/>
            <person name="Maes S."/>
            <person name="Naudts M."/>
            <person name="Inze D."/>
        </authorList>
    </citation>
    <scope>INTERACTION WITH CDKA-1</scope>
</reference>
<reference key="10">
    <citation type="journal article" date="2002" name="Planta">
        <title>Control of petal and pollen development by the plant cyclin-dependent kinase inhibitor ICK1 in transgenic Brassica plants.</title>
        <authorList>
            <person name="Zhou Y."/>
            <person name="Wang H."/>
            <person name="Gilmer S."/>
            <person name="Whitwill S."/>
            <person name="Keller W."/>
            <person name="Fowke L.C."/>
        </authorList>
    </citation>
    <scope>FUNCTION</scope>
</reference>
<reference key="11">
    <citation type="journal article" date="2002" name="Plant J.">
        <title>Synchronous Arabidopsis suspension cultures for analysis of cell-cycle gene activity.</title>
        <authorList>
            <person name="Menges M."/>
            <person name="Murray J.A.H."/>
        </authorList>
    </citation>
    <scope>DEVELOPMENTAL STAGE</scope>
</reference>
<reference key="12">
    <citation type="journal article" date="2002" name="Plant Cell">
        <title>Genome-wide analysis of core cell cycle genes in Arabidopsis.</title>
        <authorList>
            <person name="Vandepoele K."/>
            <person name="Raes J."/>
            <person name="de Veylder L."/>
            <person name="Rouze P."/>
            <person name="Rombauts S."/>
            <person name="Inze D."/>
        </authorList>
    </citation>
    <scope>GENE FAMILY</scope>
    <scope>NOMENCLATURE</scope>
</reference>
<reference key="13">
    <citation type="journal article" date="2002" name="Plant Cell">
        <title>Auxin-mediated cell cycle activation during early lateral root initiation.</title>
        <authorList>
            <person name="Himanen K."/>
            <person name="Boucheron E."/>
            <person name="Vanneste S."/>
            <person name="de Almeida Engler J."/>
            <person name="Inze D."/>
            <person name="Beeckman T."/>
        </authorList>
    </citation>
    <scope>DEVELOPMENTAL STAGE</scope>
</reference>
<reference key="14">
    <citation type="journal article" date="2003" name="Planta">
        <title>Effects of co-expressing the plant CDK inhibitor ICK1 and D-type cyclin genes on plant growth, cell size and ploidy in Arabidopsis thaliana.</title>
        <authorList>
            <person name="Zhou Y."/>
            <person name="Wang H."/>
            <person name="Gilmer S."/>
            <person name="Whitwill S."/>
            <person name="Fowke L.C."/>
        </authorList>
    </citation>
    <scope>INTERACTION WITH CYCD2-1</scope>
</reference>
<reference key="15">
    <citation type="journal article" date="2003" name="Plant Cell">
        <title>Misexpression of the cyclin-dependent kinase inhibitor ICK1/KRP1 in single-celled Arabidopsis trichomes reduces endoreduplication and cell size and induces cell death.</title>
        <authorList>
            <person name="Schnittger A."/>
            <person name="Weinl C."/>
            <person name="Bouyer D."/>
            <person name="Schoebinger U."/>
            <person name="Huelskamp M."/>
        </authorList>
    </citation>
    <scope>FUNCTION</scope>
    <scope>INTERACTION WITH CDKA-1 AND CYCD3-1</scope>
</reference>
<reference key="16">
    <citation type="journal article" date="2003" name="Plant J.">
        <title>The plant cyclin-dependent kinase inhibitor ICK1 has distinct functional domains for in vivo kinase inhibition, protein instability and nuclear localization.</title>
        <authorList>
            <person name="Zhou Y."/>
            <person name="Li G."/>
            <person name="Brandizzi F."/>
            <person name="Fowke L.C."/>
            <person name="Wang H."/>
        </authorList>
    </citation>
    <scope>FUNCTION</scope>
    <scope>SUBCELLULAR LOCATION</scope>
</reference>
<reference key="17">
    <citation type="journal article" date="2005" name="Plant Cell">
        <title>Novel functions of plant cyclin-dependent kinase inhibitors, ICK1/KRP1, can act non-cell-autonomously and inhibit entry into mitosis.</title>
        <authorList>
            <person name="Weinl C."/>
            <person name="Marquardt S."/>
            <person name="Kuijt S.J.H."/>
            <person name="Nowack M.K."/>
            <person name="Jakoby M.J."/>
            <person name="Huelskamp M."/>
            <person name="Schnittger A."/>
        </authorList>
    </citation>
    <scope>FUNCTION</scope>
    <scope>SUBCELLULAR LOCATION</scope>
</reference>
<reference key="18">
    <citation type="journal article" date="2006" name="FEBS Lett.">
        <title>Arabidopsis KRPs have distinct inhibitory activity toward cyclin D2-associated kinases, including plant-specific B-type cyclin-dependent kinase.</title>
        <authorList>
            <person name="Nakai T."/>
            <person name="Kato K."/>
            <person name="Shinmyo A."/>
            <person name="Sekine M."/>
        </authorList>
    </citation>
    <scope>FUNCTION</scope>
</reference>
<reference key="19">
    <citation type="journal article" date="2006" name="Plant Mol. Biol.">
        <title>Molecular control of nuclear and subnuclear targeting of the plant CDK inhibitor ICK1 and ICK1-mediated nuclear transport of CDKA.</title>
        <authorList>
            <person name="Zhou Y."/>
            <person name="Niu H."/>
            <person name="Brandizzi F."/>
            <person name="Fowke L.C."/>
            <person name="Wang H."/>
        </authorList>
    </citation>
    <scope>SUBCELLULAR LOCATION</scope>
    <scope>INTERACTION WITH CDKA-1</scope>
    <scope>MUTAGENESIS OF LYS-84 AND LYS-86</scope>
</reference>
<reference key="20">
    <citation type="journal article" date="2006" name="Plant Physiol.">
        <title>Analysis of the subcellular localization, function, and proteolytic control of the Arabidopsis cyclin-dependent kinase inhibitor ICK1/KRP1.</title>
        <authorList>
            <person name="Jakoby M.J."/>
            <person name="Weinl C."/>
            <person name="Pusch S."/>
            <person name="Kuijt S.J.H."/>
            <person name="Merkle T."/>
            <person name="Dissmeyer N."/>
            <person name="Schnittger A."/>
        </authorList>
    </citation>
    <scope>FUNCTION</scope>
    <scope>SUBCELLULAR LOCATION</scope>
    <scope>MUTAGENESIS OF ARG-80; ARG-81; LYS-84 AND LYS-86</scope>
</reference>
<reference key="21">
    <citation type="journal article" date="2007" name="Plant Cell Rep.">
        <title>Arabidopsis cyclin-dependent kinase inhibitors are nuclear-localized and show different localization patterns within the nucleoplasm.</title>
        <authorList>
            <person name="Bird D.A."/>
            <person name="Buruiana M.M."/>
            <person name="Zhou Y."/>
            <person name="Fowke L.C."/>
            <person name="Wang H."/>
        </authorList>
    </citation>
    <scope>FUNCTION</scope>
    <scope>SUBCELLULAR LOCATION</scope>
</reference>
<reference key="22">
    <citation type="journal article" date="2008" name="Plant J.">
        <title>Degradation of the cyclin-dependent kinase inhibitor KRP1 is regulated by two different ubiquitin E3 ligases.</title>
        <authorList>
            <person name="Ren H."/>
            <person name="Santner A."/>
            <person name="del Pozo J.C."/>
            <person name="Murray J.A."/>
            <person name="Estelle M."/>
        </authorList>
    </citation>
    <scope>TISSUE SPECIFICITY</scope>
    <scope>INTERACTION WITH CDKA-1 AND CYCD2-1</scope>
    <scope>UBIQUITINATION</scope>
    <scope>DISRUPTION PHENOTYPE</scope>
</reference>
<evidence type="ECO:0000256" key="1">
    <source>
        <dbReference type="SAM" id="MobiDB-lite"/>
    </source>
</evidence>
<evidence type="ECO:0000269" key="2">
    <source>
    </source>
</evidence>
<evidence type="ECO:0000269" key="3">
    <source>
    </source>
</evidence>
<evidence type="ECO:0000269" key="4">
    <source>
    </source>
</evidence>
<evidence type="ECO:0000269" key="5">
    <source>
    </source>
</evidence>
<evidence type="ECO:0000269" key="6">
    <source>
    </source>
</evidence>
<evidence type="ECO:0000269" key="7">
    <source>
    </source>
</evidence>
<evidence type="ECO:0000269" key="8">
    <source>
    </source>
</evidence>
<evidence type="ECO:0000269" key="9">
    <source>
    </source>
</evidence>
<evidence type="ECO:0000269" key="10">
    <source>
    </source>
</evidence>
<evidence type="ECO:0000269" key="11">
    <source>
    </source>
</evidence>
<evidence type="ECO:0000269" key="12">
    <source>
    </source>
</evidence>
<evidence type="ECO:0000269" key="13">
    <source>
    </source>
</evidence>
<evidence type="ECO:0000269" key="14">
    <source>
    </source>
</evidence>
<evidence type="ECO:0000269" key="15">
    <source>
    </source>
</evidence>
<evidence type="ECO:0000269" key="16">
    <source>
    </source>
</evidence>
<evidence type="ECO:0000269" key="17">
    <source>
    </source>
</evidence>
<evidence type="ECO:0000305" key="18"/>
<comment type="function">
    <text evidence="2 5 7 9 10 11 12 14 16 17">Binds and inhibits CYCD2-1/CDKA-1 kinase complex activity. Regulates cell division which is crucial for plant growth, development and morphogenesis. Functions in turning cells from a mitotic to an endoreplicating cell cycle mode. Acts cell- and non-cell-autonomously to regulate endoreduplication by allowing S phase progression, but blocking entry into mitosis. Keeps on the one hand the plant cell cycle locally controlled, and on the other hand provides a possibility of linking cell cycle control in single cells with the supracellular organization of a tissue or an organ. May target specifically CDKA-1.</text>
</comment>
<comment type="subunit">
    <text evidence="3 7 8 13 15 16 17">Specifically interacts with CDKA-1, but not with CDKB1-1. Interacts with CYCD2-1 and CYCD3-1.</text>
</comment>
<comment type="interaction">
    <interactant intactId="EBI-1636730">
        <id>Q67Y93</id>
    </interactant>
    <interactant intactId="EBI-371713">
        <id>P24100</id>
        <label>CDKA-1</label>
    </interactant>
    <organismsDiffer>false</organismsDiffer>
    <experiments>10</experiments>
</comment>
<comment type="subcellular location">
    <subcellularLocation>
        <location evidence="9 10 12 13 14">Nucleus</location>
        <location evidence="9 10 12 13 14">Nucleoplasm</location>
    </subcellularLocation>
    <text>Distributed in a ponctuate pattern and in heterochromatic chromocenters.</text>
</comment>
<comment type="tissue specificity">
    <text evidence="15 17">Expressed at low levels in roots, stems, leaves and flowers.</text>
</comment>
<comment type="developmental stage">
    <text evidence="4 6">Highly expressed in root pericycle and cell suspension culture during cell cycle arrest. Expressed early in the G1 phase, disappears quickly and starts to increase again to reach a peak before mitosis.</text>
</comment>
<comment type="induction">
    <text evidence="17">By abscisic acid (ABA).</text>
</comment>
<comment type="PTM">
    <text evidence="15">Ubiquitinated independently by RKP and SCF (SKP1-CUL1-FBL5/SKP2B) protein ligase complex, leading to proteasomal degradation.</text>
</comment>
<comment type="disruption phenotype">
    <text evidence="15">No visible phenotype.</text>
</comment>
<comment type="miscellaneous">
    <text>Plants overexpressing ICK1/KRP1 show altered morphology (including flowers) with a reduction in plant size, cell numbers, pollen germination, seed production and CDK kinase activity. Trichome cells misexpressing ICK1/KRP1 show reduced endoreduplication and cell size, and undergo cell death. ICK1/KRP1 degradation is regulated by the AXR1-dependent RUB conjugation pathway that is required for the function of the SCF complexes.</text>
</comment>
<comment type="similarity">
    <text evidence="18">Belongs to the CDI family. ICK/KRP subfamily.</text>
</comment>
<comment type="sequence caution" evidence="18">
    <conflict type="frameshift">
        <sequence resource="EMBL-CDS" id="BAD43255"/>
    </conflict>
</comment>
<comment type="sequence caution" evidence="18">
    <conflict type="frameshift">
        <sequence resource="EMBL-CDS" id="BAD44338"/>
    </conflict>
</comment>
<organism>
    <name type="scientific">Arabidopsis thaliana</name>
    <name type="common">Mouse-ear cress</name>
    <dbReference type="NCBI Taxonomy" id="3702"/>
    <lineage>
        <taxon>Eukaryota</taxon>
        <taxon>Viridiplantae</taxon>
        <taxon>Streptophyta</taxon>
        <taxon>Embryophyta</taxon>
        <taxon>Tracheophyta</taxon>
        <taxon>Spermatophyta</taxon>
        <taxon>Magnoliopsida</taxon>
        <taxon>eudicotyledons</taxon>
        <taxon>Gunneridae</taxon>
        <taxon>Pentapetalae</taxon>
        <taxon>rosids</taxon>
        <taxon>malvids</taxon>
        <taxon>Brassicales</taxon>
        <taxon>Brassicaceae</taxon>
        <taxon>Camelineae</taxon>
        <taxon>Arabidopsis</taxon>
    </lineage>
</organism>